<proteinExistence type="evidence at protein level"/>
<comment type="function">
    <text>Antibacterial peptide.</text>
</comment>
<comment type="subcellular location">
    <subcellularLocation>
        <location>Secreted</location>
    </subcellularLocation>
</comment>
<comment type="tissue specificity">
    <text>Hemolymph. Produced in fat body.</text>
</comment>
<comment type="induction">
    <text>By bacterial infection.</text>
</comment>
<comment type="PTM">
    <text evidence="2">O-glycosylation is important for the antibacterial activity of lebocin.</text>
</comment>
<comment type="similarity">
    <text evidence="3">Belongs to the lebocin family.</text>
</comment>
<gene>
    <name type="primary">LEB3</name>
</gene>
<organism>
    <name type="scientific">Bombyx mori</name>
    <name type="common">Silk moth</name>
    <dbReference type="NCBI Taxonomy" id="7091"/>
    <lineage>
        <taxon>Eukaryota</taxon>
        <taxon>Metazoa</taxon>
        <taxon>Ecdysozoa</taxon>
        <taxon>Arthropoda</taxon>
        <taxon>Hexapoda</taxon>
        <taxon>Insecta</taxon>
        <taxon>Pterygota</taxon>
        <taxon>Neoptera</taxon>
        <taxon>Endopterygota</taxon>
        <taxon>Lepidoptera</taxon>
        <taxon>Glossata</taxon>
        <taxon>Ditrysia</taxon>
        <taxon>Bombycoidea</taxon>
        <taxon>Bombycidae</taxon>
        <taxon>Bombycinae</taxon>
        <taxon>Bombyx</taxon>
    </lineage>
</organism>
<evidence type="ECO:0000255" key="1"/>
<evidence type="ECO:0000269" key="2">
    <source>
    </source>
</evidence>
<evidence type="ECO:0000305" key="3"/>
<feature type="signal peptide" evidence="1">
    <location>
        <begin position="1"/>
        <end position="16"/>
    </location>
</feature>
<feature type="propeptide" id="PRO_0000004977" evidence="2">
    <location>
        <begin position="17"/>
        <end position="120"/>
    </location>
</feature>
<feature type="peptide" id="PRO_0000004978" description="Lebocin-3">
    <location>
        <begin position="121"/>
        <end position="152"/>
    </location>
</feature>
<feature type="propeptide" id="PRO_0000004979">
    <location>
        <begin position="153"/>
        <end position="179"/>
    </location>
</feature>
<feature type="glycosylation site" description="O-linked (GalNAc...) threonine" evidence="2">
    <location>
        <position position="135"/>
    </location>
</feature>
<protein>
    <recommendedName>
        <fullName>Lebocin-3</fullName>
        <shortName>LEB 3</shortName>
    </recommendedName>
</protein>
<dbReference type="EMBL" id="AB003035">
    <property type="protein sequence ID" value="BAA22883.1"/>
    <property type="molecule type" value="Genomic_DNA"/>
</dbReference>
<dbReference type="PIR" id="JC5665">
    <property type="entry name" value="JC5665"/>
</dbReference>
<dbReference type="RefSeq" id="NP_001119732.1">
    <property type="nucleotide sequence ID" value="NM_001126260.1"/>
</dbReference>
<dbReference type="SMR" id="P55796"/>
<dbReference type="GlyCosmos" id="P55796">
    <property type="glycosylation" value="1 site, No reported glycans"/>
</dbReference>
<dbReference type="iPTMnet" id="P55796"/>
<dbReference type="PaxDb" id="7091-BGIBMGA006775-TA"/>
<dbReference type="GeneID" id="100146108"/>
<dbReference type="KEGG" id="bmor:100146108"/>
<dbReference type="CTD" id="100146108"/>
<dbReference type="eggNOG" id="ENOG502TC1F">
    <property type="taxonomic scope" value="Eukaryota"/>
</dbReference>
<dbReference type="HOGENOM" id="CLU_128921_0_0_1"/>
<dbReference type="InParanoid" id="P55796"/>
<dbReference type="Proteomes" id="UP000005204">
    <property type="component" value="Unassembled WGS sequence"/>
</dbReference>
<dbReference type="GO" id="GO:0005576">
    <property type="term" value="C:extracellular region"/>
    <property type="evidence" value="ECO:0007669"/>
    <property type="project" value="UniProtKB-SubCell"/>
</dbReference>
<dbReference type="GO" id="GO:0042742">
    <property type="term" value="P:defense response to bacterium"/>
    <property type="evidence" value="ECO:0007669"/>
    <property type="project" value="UniProtKB-KW"/>
</dbReference>
<dbReference type="GO" id="GO:0045087">
    <property type="term" value="P:innate immune response"/>
    <property type="evidence" value="ECO:0007669"/>
    <property type="project" value="UniProtKB-KW"/>
</dbReference>
<accession>P55796</accession>
<name>LEB3_BOMMO</name>
<sequence>MYKFLVFSSVLVLFFAQASCQRFIQPTFRPPPTQRPITRTVRQAGQEPLWLYQGDNVPRAPSTADHPILPSKIDDVQLDPNRRYVRSVTNPENNEASIEHSHHTVDIGLDQPIESHRNTRDLRFLYPRGKLPVPTLPPFNPKPIYIDMGNRYRRHASEDQEELRQYNEHFLIPRDIFQE</sequence>
<reference key="1">
    <citation type="journal article" date="1997" name="Biochem. Biophys. Res. Commun.">
        <title>A novel member of lebocin gene family from the silkworm, Bombyx mori.</title>
        <authorList>
            <person name="Furukawa S."/>
            <person name="Taniai K."/>
            <person name="Ishibashi J."/>
            <person name="Hara S."/>
            <person name="Shono T."/>
            <person name="Yamakawa M."/>
        </authorList>
    </citation>
    <scope>NUCLEOTIDE SEQUENCE [GENOMIC DNA]</scope>
    <source>
        <strain>Tokai X Asahi</strain>
    </source>
</reference>
<reference key="2">
    <citation type="journal article" date="1995" name="Biochem. J.">
        <title>A novel antibacterial peptide family isolated from the silkworm, Bombyx mori.</title>
        <authorList>
            <person name="Hara S."/>
            <person name="Yamakawa M."/>
        </authorList>
    </citation>
    <scope>PROTEIN SEQUENCE OF 121-152</scope>
    <scope>GLYCOSYLATION AT THR-135</scope>
    <source>
        <tissue>Hemolymph</tissue>
    </source>
</reference>
<keyword id="KW-0044">Antibiotic</keyword>
<keyword id="KW-0929">Antimicrobial</keyword>
<keyword id="KW-0903">Direct protein sequencing</keyword>
<keyword id="KW-0325">Glycoprotein</keyword>
<keyword id="KW-0391">Immunity</keyword>
<keyword id="KW-0399">Innate immunity</keyword>
<keyword id="KW-1185">Reference proteome</keyword>
<keyword id="KW-0964">Secreted</keyword>
<keyword id="KW-0732">Signal</keyword>